<accession>Q2A4P3</accession>
<organism>
    <name type="scientific">Francisella tularensis subsp. holarctica (strain LVS)</name>
    <dbReference type="NCBI Taxonomy" id="376619"/>
    <lineage>
        <taxon>Bacteria</taxon>
        <taxon>Pseudomonadati</taxon>
        <taxon>Pseudomonadota</taxon>
        <taxon>Gammaproteobacteria</taxon>
        <taxon>Thiotrichales</taxon>
        <taxon>Francisellaceae</taxon>
        <taxon>Francisella</taxon>
    </lineage>
</organism>
<protein>
    <recommendedName>
        <fullName evidence="1">Lipid-A-disaccharide synthase</fullName>
        <ecNumber evidence="1">2.4.1.182</ecNumber>
    </recommendedName>
</protein>
<gene>
    <name evidence="1" type="primary">lpxB</name>
    <name type="ordered locus">FTL_0540</name>
</gene>
<reference key="1">
    <citation type="submission" date="2006-03" db="EMBL/GenBank/DDBJ databases">
        <title>Complete genome sequence of Francisella tularensis LVS (Live Vaccine Strain).</title>
        <authorList>
            <person name="Chain P."/>
            <person name="Larimer F."/>
            <person name="Land M."/>
            <person name="Stilwagen S."/>
            <person name="Larsson P."/>
            <person name="Bearden S."/>
            <person name="Chu M."/>
            <person name="Oyston P."/>
            <person name="Forsman M."/>
            <person name="Andersson S."/>
            <person name="Lindler L."/>
            <person name="Titball R."/>
            <person name="Garcia E."/>
        </authorList>
    </citation>
    <scope>NUCLEOTIDE SEQUENCE [LARGE SCALE GENOMIC DNA]</scope>
    <source>
        <strain>LVS</strain>
    </source>
</reference>
<feature type="chain" id="PRO_0000255181" description="Lipid-A-disaccharide synthase">
    <location>
        <begin position="1"/>
        <end position="380"/>
    </location>
</feature>
<proteinExistence type="inferred from homology"/>
<name>LPXB_FRATH</name>
<dbReference type="EC" id="2.4.1.182" evidence="1"/>
<dbReference type="EMBL" id="AM233362">
    <property type="protein sequence ID" value="CAJ78980.1"/>
    <property type="molecule type" value="Genomic_DNA"/>
</dbReference>
<dbReference type="RefSeq" id="WP_003014884.1">
    <property type="nucleotide sequence ID" value="NZ_CP009694.1"/>
</dbReference>
<dbReference type="SMR" id="Q2A4P3"/>
<dbReference type="CAZy" id="GT19">
    <property type="family name" value="Glycosyltransferase Family 19"/>
</dbReference>
<dbReference type="KEGG" id="ftl:FTL_0540"/>
<dbReference type="UniPathway" id="UPA00973"/>
<dbReference type="Proteomes" id="UP000001944">
    <property type="component" value="Chromosome"/>
</dbReference>
<dbReference type="GO" id="GO:0016020">
    <property type="term" value="C:membrane"/>
    <property type="evidence" value="ECO:0007669"/>
    <property type="project" value="GOC"/>
</dbReference>
<dbReference type="GO" id="GO:0008915">
    <property type="term" value="F:lipid-A-disaccharide synthase activity"/>
    <property type="evidence" value="ECO:0007669"/>
    <property type="project" value="UniProtKB-UniRule"/>
</dbReference>
<dbReference type="GO" id="GO:0005543">
    <property type="term" value="F:phospholipid binding"/>
    <property type="evidence" value="ECO:0007669"/>
    <property type="project" value="TreeGrafter"/>
</dbReference>
<dbReference type="GO" id="GO:0009245">
    <property type="term" value="P:lipid A biosynthetic process"/>
    <property type="evidence" value="ECO:0007669"/>
    <property type="project" value="UniProtKB-UniRule"/>
</dbReference>
<dbReference type="CDD" id="cd01635">
    <property type="entry name" value="Glycosyltransferase_GTB-type"/>
    <property type="match status" value="1"/>
</dbReference>
<dbReference type="Gene3D" id="3.40.50.2000">
    <property type="entry name" value="Glycogen Phosphorylase B"/>
    <property type="match status" value="2"/>
</dbReference>
<dbReference type="HAMAP" id="MF_00392">
    <property type="entry name" value="LpxB"/>
    <property type="match status" value="1"/>
</dbReference>
<dbReference type="InterPro" id="IPR003835">
    <property type="entry name" value="Glyco_trans_19"/>
</dbReference>
<dbReference type="NCBIfam" id="TIGR00215">
    <property type="entry name" value="lpxB"/>
    <property type="match status" value="1"/>
</dbReference>
<dbReference type="PANTHER" id="PTHR30372">
    <property type="entry name" value="LIPID-A-DISACCHARIDE SYNTHASE"/>
    <property type="match status" value="1"/>
</dbReference>
<dbReference type="PANTHER" id="PTHR30372:SF4">
    <property type="entry name" value="LIPID-A-DISACCHARIDE SYNTHASE, MITOCHONDRIAL-RELATED"/>
    <property type="match status" value="1"/>
</dbReference>
<dbReference type="Pfam" id="PF02684">
    <property type="entry name" value="LpxB"/>
    <property type="match status" value="1"/>
</dbReference>
<dbReference type="SUPFAM" id="SSF53756">
    <property type="entry name" value="UDP-Glycosyltransferase/glycogen phosphorylase"/>
    <property type="match status" value="1"/>
</dbReference>
<comment type="function">
    <text evidence="1">Condensation of UDP-2,3-diacylglucosamine and 2,3-diacylglucosamine-1-phosphate to form lipid A disaccharide, a precursor of lipid A, a phosphorylated glycolipid that anchors the lipopolysaccharide to the outer membrane of the cell.</text>
</comment>
<comment type="catalytic activity">
    <reaction evidence="1">
        <text>a lipid X + a UDP-2-N,3-O-bis[(3R)-3-hydroxyacyl]-alpha-D-glucosamine = a lipid A disaccharide + UDP + H(+)</text>
        <dbReference type="Rhea" id="RHEA:67828"/>
        <dbReference type="ChEBI" id="CHEBI:15378"/>
        <dbReference type="ChEBI" id="CHEBI:58223"/>
        <dbReference type="ChEBI" id="CHEBI:137748"/>
        <dbReference type="ChEBI" id="CHEBI:176338"/>
        <dbReference type="ChEBI" id="CHEBI:176343"/>
        <dbReference type="EC" id="2.4.1.182"/>
    </reaction>
</comment>
<comment type="pathway">
    <text evidence="1">Bacterial outer membrane biogenesis; LPS lipid A biosynthesis.</text>
</comment>
<comment type="similarity">
    <text evidence="1">Belongs to the LpxB family.</text>
</comment>
<keyword id="KW-0328">Glycosyltransferase</keyword>
<keyword id="KW-0441">Lipid A biosynthesis</keyword>
<keyword id="KW-0444">Lipid biosynthesis</keyword>
<keyword id="KW-0443">Lipid metabolism</keyword>
<keyword id="KW-1185">Reference proteome</keyword>
<keyword id="KW-0808">Transferase</keyword>
<evidence type="ECO:0000255" key="1">
    <source>
        <dbReference type="HAMAP-Rule" id="MF_00392"/>
    </source>
</evidence>
<sequence>MRIGIVAGELSGDQLGGTLVEALKQKYPNAIIEGIGGPKMAAAGFKSLYPMDALSLIGFLEIISKGLRILSIRRKIINYFKQNKPDIFIGIDAPDFNLTVEKELRSAGIKTIHYVSPKIWVWREYRIKKIRKATDKILAILPFETEYYKNRHKFEAIYVGHPLAKNIPIHIDRAKYRDKLGLKGSSLPILSVLPGSRTTEVSRLLPLFLLALQKLVDAGYKFKAIMPLAKPSLKPLFAKYKEQIDSLGIEVFETNSHDVLKASDLSLLASGTATLEAMLCKLPMVVGYKLSWLSALIGRMLIGNHSYWAFPNILHKNEIIKELIQEDCTVDNLFSELKRLFDDKRRNDYIVEEFEKIHKEMVIDTESKIIQVLDTMIEKS</sequence>